<feature type="signal peptide" evidence="1">
    <location>
        <begin position="1"/>
        <end position="23"/>
    </location>
</feature>
<feature type="chain" id="PRO_0000024848" description="Uncharacterized 30.6 kDa protein in fumA 3'region">
    <location>
        <begin position="24"/>
        <end position="265"/>
    </location>
</feature>
<feature type="domain" description="NodB homology" evidence="2">
    <location>
        <begin position="67"/>
        <end position="248"/>
    </location>
</feature>
<name>YFUM2_GEOSE</name>
<keyword id="KW-0378">Hydrolase</keyword>
<keyword id="KW-0732">Signal</keyword>
<protein>
    <recommendedName>
        <fullName>Uncharacterized 30.6 kDa protein in fumA 3'region</fullName>
        <ecNumber>3.5.1.-</ecNumber>
    </recommendedName>
    <alternativeName>
        <fullName>ORF2</fullName>
    </alternativeName>
</protein>
<proteinExistence type="inferred from homology"/>
<sequence length="265" mass="30583">MNYFRILYCSVLLFFSFFSCTSAAVSNHPIHWGFQKNNNHQPPDAGKEWNELLNKYGAFYLGDPSKKEIYLTFDNGYENGYTSKILDVLKKHDVHATFFVTGHYLKTAPDLVKRMVKEGHIVGNHSWSHPDMTTISADKIKKELDAVSDKVKELTGQEGTVYVRPPRGIFSERTLALSEKYGYRNIFWSLAFVDWKVNEQKGWRYAYDNIINQIHPGAIILLHTVSKDNADALDEAIKTLKQQGYTFKSLDDLVMEKMFESPFLY</sequence>
<dbReference type="EC" id="3.5.1.-"/>
<dbReference type="EMBL" id="L05611">
    <property type="protein sequence ID" value="AAA72318.1"/>
    <property type="molecule type" value="Genomic_DNA"/>
</dbReference>
<dbReference type="PIR" id="B47692">
    <property type="entry name" value="B47692"/>
</dbReference>
<dbReference type="SMR" id="Q04729"/>
<dbReference type="GO" id="GO:0016020">
    <property type="term" value="C:membrane"/>
    <property type="evidence" value="ECO:0007669"/>
    <property type="project" value="TreeGrafter"/>
</dbReference>
<dbReference type="GO" id="GO:0016810">
    <property type="term" value="F:hydrolase activity, acting on carbon-nitrogen (but not peptide) bonds"/>
    <property type="evidence" value="ECO:0007669"/>
    <property type="project" value="InterPro"/>
</dbReference>
<dbReference type="GO" id="GO:0005975">
    <property type="term" value="P:carbohydrate metabolic process"/>
    <property type="evidence" value="ECO:0007669"/>
    <property type="project" value="InterPro"/>
</dbReference>
<dbReference type="CDD" id="cd10948">
    <property type="entry name" value="CE4_BsPdaA_like"/>
    <property type="match status" value="1"/>
</dbReference>
<dbReference type="Gene3D" id="3.20.20.370">
    <property type="entry name" value="Glycoside hydrolase/deacetylase"/>
    <property type="match status" value="1"/>
</dbReference>
<dbReference type="InterPro" id="IPR011330">
    <property type="entry name" value="Glyco_hydro/deAcase_b/a-brl"/>
</dbReference>
<dbReference type="InterPro" id="IPR002509">
    <property type="entry name" value="NODB_dom"/>
</dbReference>
<dbReference type="InterPro" id="IPR050248">
    <property type="entry name" value="Polysacc_deacetylase_ArnD"/>
</dbReference>
<dbReference type="InterPro" id="IPR014235">
    <property type="entry name" value="Spore_PdaA"/>
</dbReference>
<dbReference type="NCBIfam" id="TIGR02884">
    <property type="entry name" value="spore_pdaA"/>
    <property type="match status" value="1"/>
</dbReference>
<dbReference type="PANTHER" id="PTHR10587">
    <property type="entry name" value="GLYCOSYL TRANSFERASE-RELATED"/>
    <property type="match status" value="1"/>
</dbReference>
<dbReference type="PANTHER" id="PTHR10587:SF78">
    <property type="entry name" value="PEPTIDOGLYCAN-N-ACETYLMURAMIC ACID DEACETYLASE PDAA"/>
    <property type="match status" value="1"/>
</dbReference>
<dbReference type="Pfam" id="PF01522">
    <property type="entry name" value="Polysacc_deac_1"/>
    <property type="match status" value="1"/>
</dbReference>
<dbReference type="SUPFAM" id="SSF88713">
    <property type="entry name" value="Glycoside hydrolase/deacetylase"/>
    <property type="match status" value="1"/>
</dbReference>
<dbReference type="PROSITE" id="PS51677">
    <property type="entry name" value="NODB"/>
    <property type="match status" value="1"/>
</dbReference>
<dbReference type="PROSITE" id="PS51257">
    <property type="entry name" value="PROKAR_LIPOPROTEIN"/>
    <property type="match status" value="1"/>
</dbReference>
<comment type="similarity">
    <text evidence="3">Belongs to the polysaccharide deacetylase family.</text>
</comment>
<evidence type="ECO:0000255" key="1">
    <source>
        <dbReference type="PROSITE-ProRule" id="PRU00303"/>
    </source>
</evidence>
<evidence type="ECO:0000255" key="2">
    <source>
        <dbReference type="PROSITE-ProRule" id="PRU01014"/>
    </source>
</evidence>
<evidence type="ECO:0000305" key="3"/>
<organism>
    <name type="scientific">Geobacillus stearothermophilus</name>
    <name type="common">Bacillus stearothermophilus</name>
    <dbReference type="NCBI Taxonomy" id="1422"/>
    <lineage>
        <taxon>Bacteria</taxon>
        <taxon>Bacillati</taxon>
        <taxon>Bacillota</taxon>
        <taxon>Bacilli</taxon>
        <taxon>Bacillales</taxon>
        <taxon>Anoxybacillaceae</taxon>
        <taxon>Geobacillus</taxon>
    </lineage>
</organism>
<accession>Q04729</accession>
<reference key="1">
    <citation type="journal article" date="1993" name="J. Gen. Microbiol.">
        <title>Molecular and enzymological evidence for two classes of fumarase in Bacillus stearothermophilus (var. non-diastaticus).</title>
        <authorList>
            <person name="Reaney S.K."/>
            <person name="Bungard S.J."/>
            <person name="Guest J.R."/>
        </authorList>
    </citation>
    <scope>NUCLEOTIDE SEQUENCE [GENOMIC DNA]</scope>
    <source>
        <strain>DSM 2334 / Var. Non-diastaticus</strain>
    </source>
</reference>